<keyword id="KW-1185">Reference proteome</keyword>
<keyword id="KW-0687">Ribonucleoprotein</keyword>
<keyword id="KW-0689">Ribosomal protein</keyword>
<keyword id="KW-0694">RNA-binding</keyword>
<keyword id="KW-0699">rRNA-binding</keyword>
<feature type="chain" id="PRO_1000052131" description="Large ribosomal subunit protein uL3">
    <location>
        <begin position="1"/>
        <end position="216"/>
    </location>
</feature>
<feature type="region of interest" description="Disordered" evidence="2">
    <location>
        <begin position="132"/>
        <end position="157"/>
    </location>
</feature>
<reference key="1">
    <citation type="journal article" date="2007" name="Nat. Biotechnol.">
        <title>Complete genome sequence of the erythromycin-producing bacterium Saccharopolyspora erythraea NRRL23338.</title>
        <authorList>
            <person name="Oliynyk M."/>
            <person name="Samborskyy M."/>
            <person name="Lester J.B."/>
            <person name="Mironenko T."/>
            <person name="Scott N."/>
            <person name="Dickens S."/>
            <person name="Haydock S.F."/>
            <person name="Leadlay P.F."/>
        </authorList>
    </citation>
    <scope>NUCLEOTIDE SEQUENCE [LARGE SCALE GENOMIC DNA]</scope>
    <source>
        <strain>ATCC 11635 / DSM 40517 / JCM 4748 / NBRC 13426 / NCIMB 8594 / NRRL 2338</strain>
    </source>
</reference>
<gene>
    <name evidence="1" type="primary">rplC</name>
    <name type="ordered locus">SACE_6836</name>
</gene>
<comment type="function">
    <text evidence="1">One of the primary rRNA binding proteins, it binds directly near the 3'-end of the 23S rRNA, where it nucleates assembly of the 50S subunit.</text>
</comment>
<comment type="subunit">
    <text evidence="1">Part of the 50S ribosomal subunit. Forms a cluster with proteins L14 and L19.</text>
</comment>
<comment type="similarity">
    <text evidence="1">Belongs to the universal ribosomal protein uL3 family.</text>
</comment>
<protein>
    <recommendedName>
        <fullName evidence="1">Large ribosomal subunit protein uL3</fullName>
    </recommendedName>
    <alternativeName>
        <fullName evidence="3">50S ribosomal protein L3</fullName>
    </alternativeName>
</protein>
<dbReference type="EMBL" id="AM420293">
    <property type="protein sequence ID" value="CAM06000.1"/>
    <property type="molecule type" value="Genomic_DNA"/>
</dbReference>
<dbReference type="RefSeq" id="WP_009948627.1">
    <property type="nucleotide sequence ID" value="NC_009142.1"/>
</dbReference>
<dbReference type="SMR" id="A4FPM5"/>
<dbReference type="STRING" id="405948.SACE_6836"/>
<dbReference type="KEGG" id="sen:SACE_6836"/>
<dbReference type="eggNOG" id="COG0087">
    <property type="taxonomic scope" value="Bacteria"/>
</dbReference>
<dbReference type="HOGENOM" id="CLU_044142_4_1_11"/>
<dbReference type="OrthoDB" id="9806135at2"/>
<dbReference type="Proteomes" id="UP000006728">
    <property type="component" value="Chromosome"/>
</dbReference>
<dbReference type="GO" id="GO:0022625">
    <property type="term" value="C:cytosolic large ribosomal subunit"/>
    <property type="evidence" value="ECO:0007669"/>
    <property type="project" value="TreeGrafter"/>
</dbReference>
<dbReference type="GO" id="GO:0019843">
    <property type="term" value="F:rRNA binding"/>
    <property type="evidence" value="ECO:0007669"/>
    <property type="project" value="UniProtKB-UniRule"/>
</dbReference>
<dbReference type="GO" id="GO:0003735">
    <property type="term" value="F:structural constituent of ribosome"/>
    <property type="evidence" value="ECO:0007669"/>
    <property type="project" value="InterPro"/>
</dbReference>
<dbReference type="GO" id="GO:0006412">
    <property type="term" value="P:translation"/>
    <property type="evidence" value="ECO:0007669"/>
    <property type="project" value="UniProtKB-UniRule"/>
</dbReference>
<dbReference type="FunFam" id="2.40.30.10:FF:000004">
    <property type="entry name" value="50S ribosomal protein L3"/>
    <property type="match status" value="1"/>
</dbReference>
<dbReference type="FunFam" id="3.30.160.810:FF:000003">
    <property type="entry name" value="50S ribosomal protein L3"/>
    <property type="match status" value="1"/>
</dbReference>
<dbReference type="Gene3D" id="3.30.160.810">
    <property type="match status" value="1"/>
</dbReference>
<dbReference type="Gene3D" id="2.40.30.10">
    <property type="entry name" value="Translation factors"/>
    <property type="match status" value="1"/>
</dbReference>
<dbReference type="HAMAP" id="MF_01325_B">
    <property type="entry name" value="Ribosomal_uL3_B"/>
    <property type="match status" value="1"/>
</dbReference>
<dbReference type="InterPro" id="IPR000597">
    <property type="entry name" value="Ribosomal_uL3"/>
</dbReference>
<dbReference type="InterPro" id="IPR019927">
    <property type="entry name" value="Ribosomal_uL3_bac/org-type"/>
</dbReference>
<dbReference type="InterPro" id="IPR019926">
    <property type="entry name" value="Ribosomal_uL3_CS"/>
</dbReference>
<dbReference type="InterPro" id="IPR009000">
    <property type="entry name" value="Transl_B-barrel_sf"/>
</dbReference>
<dbReference type="NCBIfam" id="TIGR03625">
    <property type="entry name" value="L3_bact"/>
    <property type="match status" value="1"/>
</dbReference>
<dbReference type="PANTHER" id="PTHR11229">
    <property type="entry name" value="50S RIBOSOMAL PROTEIN L3"/>
    <property type="match status" value="1"/>
</dbReference>
<dbReference type="PANTHER" id="PTHR11229:SF16">
    <property type="entry name" value="LARGE RIBOSOMAL SUBUNIT PROTEIN UL3C"/>
    <property type="match status" value="1"/>
</dbReference>
<dbReference type="Pfam" id="PF00297">
    <property type="entry name" value="Ribosomal_L3"/>
    <property type="match status" value="1"/>
</dbReference>
<dbReference type="SUPFAM" id="SSF50447">
    <property type="entry name" value="Translation proteins"/>
    <property type="match status" value="1"/>
</dbReference>
<dbReference type="PROSITE" id="PS00474">
    <property type="entry name" value="RIBOSOMAL_L3"/>
    <property type="match status" value="1"/>
</dbReference>
<organism>
    <name type="scientific">Saccharopolyspora erythraea (strain ATCC 11635 / DSM 40517 / JCM 4748 / NBRC 13426 / NCIMB 8594 / NRRL 2338)</name>
    <dbReference type="NCBI Taxonomy" id="405948"/>
    <lineage>
        <taxon>Bacteria</taxon>
        <taxon>Bacillati</taxon>
        <taxon>Actinomycetota</taxon>
        <taxon>Actinomycetes</taxon>
        <taxon>Pseudonocardiales</taxon>
        <taxon>Pseudonocardiaceae</taxon>
        <taxon>Saccharopolyspora</taxon>
    </lineage>
</organism>
<accession>A4FPM5</accession>
<name>RL3_SACEN</name>
<sequence length="216" mass="22706">MSDRQIKGILGTKLGMTQVFDDQNRVVPVTVVQAGPNVVTQIRTPEKDGYSAVQLAFGAIDPRKVNKPRTGHFTKAGVTPRRHVVELRTADAGEYEVGQEVTAEVFEAGTVVDVVGTSKGKGFAGTMKRHGFRGQGASHGTQAVHRKPGSIGGCATPGRVFKGMRMSGRMGSDRVTTQNLKVHRVEGESGLLLIKGAIPGPKGGLVLVKSPAKGGA</sequence>
<proteinExistence type="inferred from homology"/>
<evidence type="ECO:0000255" key="1">
    <source>
        <dbReference type="HAMAP-Rule" id="MF_01325"/>
    </source>
</evidence>
<evidence type="ECO:0000256" key="2">
    <source>
        <dbReference type="SAM" id="MobiDB-lite"/>
    </source>
</evidence>
<evidence type="ECO:0000305" key="3"/>